<organism>
    <name type="scientific">Homo sapiens</name>
    <name type="common">Human</name>
    <dbReference type="NCBI Taxonomy" id="9606"/>
    <lineage>
        <taxon>Eukaryota</taxon>
        <taxon>Metazoa</taxon>
        <taxon>Chordata</taxon>
        <taxon>Craniata</taxon>
        <taxon>Vertebrata</taxon>
        <taxon>Euteleostomi</taxon>
        <taxon>Mammalia</taxon>
        <taxon>Eutheria</taxon>
        <taxon>Euarchontoglires</taxon>
        <taxon>Primates</taxon>
        <taxon>Haplorrhini</taxon>
        <taxon>Catarrhini</taxon>
        <taxon>Hominidae</taxon>
        <taxon>Homo</taxon>
    </lineage>
</organism>
<dbReference type="EMBL" id="M57627">
    <property type="protein sequence ID" value="AAA63207.1"/>
    <property type="molecule type" value="mRNA"/>
</dbReference>
<dbReference type="EMBL" id="U16720">
    <property type="protein sequence ID" value="AAA80104.1"/>
    <property type="molecule type" value="Genomic_DNA"/>
</dbReference>
<dbReference type="EMBL" id="AY029171">
    <property type="protein sequence ID" value="AAK38162.1"/>
    <property type="molecule type" value="mRNA"/>
</dbReference>
<dbReference type="EMBL" id="AF418271">
    <property type="protein sequence ID" value="AAL06594.1"/>
    <property type="molecule type" value="Genomic_DNA"/>
</dbReference>
<dbReference type="CCDS" id="CCDS1467.1"/>
<dbReference type="PIR" id="A38580">
    <property type="entry name" value="A38580"/>
</dbReference>
<dbReference type="RefSeq" id="NP_000563.1">
    <property type="nucleotide sequence ID" value="NM_000572.3"/>
</dbReference>
<dbReference type="PDB" id="1ILK">
    <property type="method" value="X-ray"/>
    <property type="resolution" value="1.80 A"/>
    <property type="chains" value="A=28-178"/>
</dbReference>
<dbReference type="PDB" id="1INR">
    <property type="method" value="X-ray"/>
    <property type="resolution" value="2.00 A"/>
    <property type="chains" value="A=19-178"/>
</dbReference>
<dbReference type="PDB" id="1J7V">
    <property type="method" value="X-ray"/>
    <property type="resolution" value="2.90 A"/>
    <property type="chains" value="L=19-178"/>
</dbReference>
<dbReference type="PDB" id="1LK3">
    <property type="method" value="X-ray"/>
    <property type="resolution" value="1.91 A"/>
    <property type="chains" value="A/B=26-178"/>
</dbReference>
<dbReference type="PDB" id="1Y6K">
    <property type="method" value="X-ray"/>
    <property type="resolution" value="2.52 A"/>
    <property type="chains" value="L=19-178"/>
</dbReference>
<dbReference type="PDB" id="2H24">
    <property type="method" value="X-ray"/>
    <property type="resolution" value="2.00 A"/>
    <property type="chains" value="A=19-178"/>
</dbReference>
<dbReference type="PDB" id="2ILK">
    <property type="method" value="X-ray"/>
    <property type="resolution" value="1.60 A"/>
    <property type="chains" value="A=19-178"/>
</dbReference>
<dbReference type="PDB" id="6X93">
    <property type="method" value="EM"/>
    <property type="resolution" value="3.50 A"/>
    <property type="chains" value="A/D=19-178"/>
</dbReference>
<dbReference type="PDB" id="8SVE">
    <property type="method" value="X-ray"/>
    <property type="resolution" value="2.40 A"/>
    <property type="chains" value="L/M=19-178"/>
</dbReference>
<dbReference type="PDBsum" id="1ILK"/>
<dbReference type="PDBsum" id="1INR"/>
<dbReference type="PDBsum" id="1J7V"/>
<dbReference type="PDBsum" id="1LK3"/>
<dbReference type="PDBsum" id="1Y6K"/>
<dbReference type="PDBsum" id="2H24"/>
<dbReference type="PDBsum" id="2ILK"/>
<dbReference type="PDBsum" id="6X93"/>
<dbReference type="PDBsum" id="8SVE"/>
<dbReference type="EMDB" id="EMD-22098"/>
<dbReference type="SMR" id="P22301"/>
<dbReference type="BioGRID" id="109800">
    <property type="interactions" value="22"/>
</dbReference>
<dbReference type="ComplexPortal" id="CPX-735">
    <property type="entry name" value="Interleukin-10 complex"/>
</dbReference>
<dbReference type="ComplexPortal" id="CPX-742">
    <property type="entry name" value="Interleukin-10 receptor-ligand complex"/>
</dbReference>
<dbReference type="CORUM" id="P22301"/>
<dbReference type="DIP" id="DIP-3511N"/>
<dbReference type="FunCoup" id="P22301">
    <property type="interactions" value="974"/>
</dbReference>
<dbReference type="IntAct" id="P22301">
    <property type="interactions" value="15"/>
</dbReference>
<dbReference type="MINT" id="P22301"/>
<dbReference type="STRING" id="9606.ENSP00000412237"/>
<dbReference type="BindingDB" id="P22301"/>
<dbReference type="ChEMBL" id="CHEMBL3712920"/>
<dbReference type="DrugBank" id="DB05744">
    <property type="generic name" value="CRx-139"/>
</dbReference>
<dbReference type="DrugBank" id="DB05771">
    <property type="generic name" value="LLL-3348"/>
</dbReference>
<dbReference type="GlyCosmos" id="P22301">
    <property type="glycosylation" value="1 site, No reported glycans"/>
</dbReference>
<dbReference type="GlyGen" id="P22301">
    <property type="glycosylation" value="2 sites"/>
</dbReference>
<dbReference type="BioMuta" id="IL10"/>
<dbReference type="DMDM" id="124292"/>
<dbReference type="MassIVE" id="P22301"/>
<dbReference type="PaxDb" id="9606-ENSP00000412237"/>
<dbReference type="PeptideAtlas" id="P22301"/>
<dbReference type="ProteomicsDB" id="53970"/>
<dbReference type="ABCD" id="P22301">
    <property type="antibodies" value="1 sequenced antibody"/>
</dbReference>
<dbReference type="Antibodypedia" id="3407">
    <property type="antibodies" value="1736 antibodies from 50 providers"/>
</dbReference>
<dbReference type="DNASU" id="3586"/>
<dbReference type="Ensembl" id="ENST00000423557.1">
    <property type="protein sequence ID" value="ENSP00000412237.1"/>
    <property type="gene ID" value="ENSG00000136634.7"/>
</dbReference>
<dbReference type="GeneID" id="3586"/>
<dbReference type="KEGG" id="hsa:3586"/>
<dbReference type="MANE-Select" id="ENST00000423557.1">
    <property type="protein sequence ID" value="ENSP00000412237.1"/>
    <property type="RefSeq nucleotide sequence ID" value="NM_000572.3"/>
    <property type="RefSeq protein sequence ID" value="NP_000563.1"/>
</dbReference>
<dbReference type="AGR" id="HGNC:5962"/>
<dbReference type="CTD" id="3586"/>
<dbReference type="DisGeNET" id="3586"/>
<dbReference type="GeneCards" id="IL10"/>
<dbReference type="HGNC" id="HGNC:5962">
    <property type="gene designation" value="IL10"/>
</dbReference>
<dbReference type="HPA" id="ENSG00000136634">
    <property type="expression patterns" value="Tissue enhanced (adipose tissue, lymphoid tissue)"/>
</dbReference>
<dbReference type="MalaCards" id="IL10"/>
<dbReference type="MIM" id="124092">
    <property type="type" value="gene"/>
</dbReference>
<dbReference type="MIM" id="614395">
    <property type="type" value="phenotype"/>
</dbReference>
<dbReference type="neXtProt" id="NX_P22301"/>
<dbReference type="OpenTargets" id="ENSG00000136634"/>
<dbReference type="Orphanet" id="117">
    <property type="disease" value="Behcet disease"/>
</dbReference>
<dbReference type="Orphanet" id="238569">
    <property type="disease" value="Immune dysregulation-inflammatory bowel disease-arthritis-recurrent infections syndrome"/>
</dbReference>
<dbReference type="Orphanet" id="536">
    <property type="disease" value="Systemic lupus erythematosus"/>
</dbReference>
<dbReference type="PharmGKB" id="PA29778"/>
<dbReference type="VEuPathDB" id="HostDB:ENSG00000136634"/>
<dbReference type="eggNOG" id="ENOG502S22U">
    <property type="taxonomic scope" value="Eukaryota"/>
</dbReference>
<dbReference type="GeneTree" id="ENSGT00950000183124"/>
<dbReference type="HOGENOM" id="CLU_127747_0_0_1"/>
<dbReference type="InParanoid" id="P22301"/>
<dbReference type="OMA" id="CHRFFTC"/>
<dbReference type="OrthoDB" id="9931894at2759"/>
<dbReference type="PAN-GO" id="P22301">
    <property type="GO annotations" value="1 GO annotation based on evolutionary models"/>
</dbReference>
<dbReference type="PhylomeDB" id="P22301"/>
<dbReference type="TreeFam" id="TF333253"/>
<dbReference type="PathwayCommons" id="P22301"/>
<dbReference type="Reactome" id="R-HSA-6783783">
    <property type="pathway name" value="Interleukin-10 signaling"/>
</dbReference>
<dbReference type="Reactome" id="R-HSA-6785807">
    <property type="pathway name" value="Interleukin-4 and Interleukin-13 signaling"/>
</dbReference>
<dbReference type="Reactome" id="R-HSA-8950505">
    <property type="pathway name" value="Gene and protein expression by JAK-STAT signaling after Interleukin-12 stimulation"/>
</dbReference>
<dbReference type="Reactome" id="R-HSA-9662834">
    <property type="pathway name" value="CD163 mediating an anti-inflammatory response"/>
</dbReference>
<dbReference type="Reactome" id="R-HSA-9664323">
    <property type="pathway name" value="FCGR3A-mediated IL10 synthesis"/>
</dbReference>
<dbReference type="Reactome" id="R-HSA-9725370">
    <property type="pathway name" value="Signaling by ALK fusions and activated point mutants"/>
</dbReference>
<dbReference type="SignaLink" id="P22301"/>
<dbReference type="SIGNOR" id="P22301"/>
<dbReference type="BioGRID-ORCS" id="3586">
    <property type="hits" value="8 hits in 1150 CRISPR screens"/>
</dbReference>
<dbReference type="ChiTaRS" id="IL10">
    <property type="organism name" value="human"/>
</dbReference>
<dbReference type="EvolutionaryTrace" id="P22301"/>
<dbReference type="GeneWiki" id="Interleukin_10"/>
<dbReference type="GenomeRNAi" id="3586"/>
<dbReference type="Pharos" id="P22301">
    <property type="development level" value="Tbio"/>
</dbReference>
<dbReference type="PRO" id="PR:P22301"/>
<dbReference type="Proteomes" id="UP000005640">
    <property type="component" value="Chromosome 1"/>
</dbReference>
<dbReference type="RNAct" id="P22301">
    <property type="molecule type" value="protein"/>
</dbReference>
<dbReference type="Bgee" id="ENSG00000136634">
    <property type="expression patterns" value="Expressed in vermiform appendix and 103 other cell types or tissues"/>
</dbReference>
<dbReference type="ExpressionAtlas" id="P22301">
    <property type="expression patterns" value="baseline and differential"/>
</dbReference>
<dbReference type="GO" id="GO:0005576">
    <property type="term" value="C:extracellular region"/>
    <property type="evidence" value="ECO:0000304"/>
    <property type="project" value="Reactome"/>
</dbReference>
<dbReference type="GO" id="GO:0005615">
    <property type="term" value="C:extracellular space"/>
    <property type="evidence" value="ECO:0000314"/>
    <property type="project" value="BHF-UCL"/>
</dbReference>
<dbReference type="GO" id="GO:0005125">
    <property type="term" value="F:cytokine activity"/>
    <property type="evidence" value="ECO:0000314"/>
    <property type="project" value="UniProt"/>
</dbReference>
<dbReference type="GO" id="GO:0008083">
    <property type="term" value="F:growth factor activity"/>
    <property type="evidence" value="ECO:0000303"/>
    <property type="project" value="UniProtKB"/>
</dbReference>
<dbReference type="GO" id="GO:0005141">
    <property type="term" value="F:interleukin-10 receptor binding"/>
    <property type="evidence" value="ECO:0000303"/>
    <property type="project" value="UniProtKB"/>
</dbReference>
<dbReference type="GO" id="GO:0046983">
    <property type="term" value="F:protein dimerization activity"/>
    <property type="evidence" value="ECO:0000314"/>
    <property type="project" value="UniProtKB"/>
</dbReference>
<dbReference type="GO" id="GO:0030183">
    <property type="term" value="P:B cell differentiation"/>
    <property type="evidence" value="ECO:0000303"/>
    <property type="project" value="UniProtKB"/>
</dbReference>
<dbReference type="GO" id="GO:0042100">
    <property type="term" value="P:B cell proliferation"/>
    <property type="evidence" value="ECO:0000303"/>
    <property type="project" value="UniProtKB"/>
</dbReference>
<dbReference type="GO" id="GO:0060670">
    <property type="term" value="P:branching involved in labyrinthine layer morphogenesis"/>
    <property type="evidence" value="ECO:0007669"/>
    <property type="project" value="Ensembl"/>
</dbReference>
<dbReference type="GO" id="GO:0071392">
    <property type="term" value="P:cellular response to estradiol stimulus"/>
    <property type="evidence" value="ECO:0007669"/>
    <property type="project" value="Ensembl"/>
</dbReference>
<dbReference type="GO" id="GO:0035729">
    <property type="term" value="P:cellular response to hepatocyte growth factor stimulus"/>
    <property type="evidence" value="ECO:0007669"/>
    <property type="project" value="Ensembl"/>
</dbReference>
<dbReference type="GO" id="GO:0071222">
    <property type="term" value="P:cellular response to lipopolysaccharide"/>
    <property type="evidence" value="ECO:0000314"/>
    <property type="project" value="ARUK-UCL"/>
</dbReference>
<dbReference type="GO" id="GO:0002439">
    <property type="term" value="P:chronic inflammatory response to antigenic stimulus"/>
    <property type="evidence" value="ECO:0007669"/>
    <property type="project" value="Ensembl"/>
</dbReference>
<dbReference type="GO" id="GO:0042742">
    <property type="term" value="P:defense response to bacterium"/>
    <property type="evidence" value="ECO:0007669"/>
    <property type="project" value="Ensembl"/>
</dbReference>
<dbReference type="GO" id="GO:0042832">
    <property type="term" value="P:defense response to protozoan"/>
    <property type="evidence" value="ECO:0007669"/>
    <property type="project" value="Ensembl"/>
</dbReference>
<dbReference type="GO" id="GO:0072577">
    <property type="term" value="P:endothelial cell apoptotic process"/>
    <property type="evidence" value="ECO:0000250"/>
    <property type="project" value="BHF-UCL"/>
</dbReference>
<dbReference type="GO" id="GO:0030097">
    <property type="term" value="P:hemopoiesis"/>
    <property type="evidence" value="ECO:0000304"/>
    <property type="project" value="UniProtKB"/>
</dbReference>
<dbReference type="GO" id="GO:0006955">
    <property type="term" value="P:immune response"/>
    <property type="evidence" value="ECO:0000318"/>
    <property type="project" value="GO_Central"/>
</dbReference>
<dbReference type="GO" id="GO:0140105">
    <property type="term" value="P:interleukin-10-mediated signaling pathway"/>
    <property type="evidence" value="ECO:0000314"/>
    <property type="project" value="BHF-UCL"/>
</dbReference>
<dbReference type="GO" id="GO:0030595">
    <property type="term" value="P:leukocyte chemotaxis"/>
    <property type="evidence" value="ECO:0000304"/>
    <property type="project" value="ProtInc"/>
</dbReference>
<dbReference type="GO" id="GO:0097421">
    <property type="term" value="P:liver regeneration"/>
    <property type="evidence" value="ECO:0007669"/>
    <property type="project" value="Ensembl"/>
</dbReference>
<dbReference type="GO" id="GO:0043066">
    <property type="term" value="P:negative regulation of apoptotic process"/>
    <property type="evidence" value="ECO:0000303"/>
    <property type="project" value="UniProtKB"/>
</dbReference>
<dbReference type="GO" id="GO:0010507">
    <property type="term" value="P:negative regulation of autophagy"/>
    <property type="evidence" value="ECO:0000314"/>
    <property type="project" value="UniProtKB"/>
</dbReference>
<dbReference type="GO" id="GO:0030889">
    <property type="term" value="P:negative regulation of B cell proliferation"/>
    <property type="evidence" value="ECO:0000314"/>
    <property type="project" value="MGI"/>
</dbReference>
<dbReference type="GO" id="GO:0008285">
    <property type="term" value="P:negative regulation of cell population proliferation"/>
    <property type="evidence" value="ECO:0000250"/>
    <property type="project" value="BHF-UCL"/>
</dbReference>
<dbReference type="GO" id="GO:0071650">
    <property type="term" value="P:negative regulation of chemokine (C-C motif) ligand 5 production"/>
    <property type="evidence" value="ECO:0000304"/>
    <property type="project" value="AgBase"/>
</dbReference>
<dbReference type="GO" id="GO:0002875">
    <property type="term" value="P:negative regulation of chronic inflammatory response to antigenic stimulus"/>
    <property type="evidence" value="ECO:0007669"/>
    <property type="project" value="Ensembl"/>
</dbReference>
<dbReference type="GO" id="GO:0060302">
    <property type="term" value="P:negative regulation of cytokine activity"/>
    <property type="evidence" value="ECO:0000315"/>
    <property type="project" value="CACAO"/>
</dbReference>
<dbReference type="GO" id="GO:0001818">
    <property type="term" value="P:negative regulation of cytokine production"/>
    <property type="evidence" value="ECO:0000314"/>
    <property type="project" value="UniProtKB"/>
</dbReference>
<dbReference type="GO" id="GO:0002719">
    <property type="term" value="P:negative regulation of cytokine production involved in immune response"/>
    <property type="evidence" value="ECO:0000314"/>
    <property type="project" value="BHF-UCL"/>
</dbReference>
<dbReference type="GO" id="GO:0034115">
    <property type="term" value="P:negative regulation of heterotypic cell-cell adhesion"/>
    <property type="evidence" value="ECO:0000250"/>
    <property type="project" value="BHF-UCL"/>
</dbReference>
<dbReference type="GO" id="GO:0050728">
    <property type="term" value="P:negative regulation of inflammatory response"/>
    <property type="evidence" value="ECO:0000314"/>
    <property type="project" value="BHF-UCL"/>
</dbReference>
<dbReference type="GO" id="GO:0032687">
    <property type="term" value="P:negative regulation of interferon-alpha production"/>
    <property type="evidence" value="ECO:0000303"/>
    <property type="project" value="UniProtKB"/>
</dbReference>
<dbReference type="GO" id="GO:0032692">
    <property type="term" value="P:negative regulation of interleukin-1 production"/>
    <property type="evidence" value="ECO:0000304"/>
    <property type="project" value="AgBase"/>
</dbReference>
<dbReference type="GO" id="GO:0032695">
    <property type="term" value="P:negative regulation of interleukin-12 production"/>
    <property type="evidence" value="ECO:0000304"/>
    <property type="project" value="AgBase"/>
</dbReference>
<dbReference type="GO" id="GO:0032701">
    <property type="term" value="P:negative regulation of interleukin-18 production"/>
    <property type="evidence" value="ECO:0000304"/>
    <property type="project" value="AgBase"/>
</dbReference>
<dbReference type="GO" id="GO:0032715">
    <property type="term" value="P:negative regulation of interleukin-6 production"/>
    <property type="evidence" value="ECO:0000314"/>
    <property type="project" value="BHF-UCL"/>
</dbReference>
<dbReference type="GO" id="GO:0032717">
    <property type="term" value="P:negative regulation of interleukin-8 production"/>
    <property type="evidence" value="ECO:0000304"/>
    <property type="project" value="AgBase"/>
</dbReference>
<dbReference type="GO" id="GO:0051045">
    <property type="term" value="P:negative regulation of membrane protein ectodomain proteolysis"/>
    <property type="evidence" value="ECO:0000314"/>
    <property type="project" value="BHF-UCL"/>
</dbReference>
<dbReference type="GO" id="GO:0045347">
    <property type="term" value="P:negative regulation of MHC class II biosynthetic process"/>
    <property type="evidence" value="ECO:0000314"/>
    <property type="project" value="UniProtKB"/>
</dbReference>
<dbReference type="GO" id="GO:0045930">
    <property type="term" value="P:negative regulation of mitotic cell cycle"/>
    <property type="evidence" value="ECO:0000250"/>
    <property type="project" value="BHF-UCL"/>
</dbReference>
<dbReference type="GO" id="GO:0030886">
    <property type="term" value="P:negative regulation of myeloid dendritic cell activation"/>
    <property type="evidence" value="ECO:0007669"/>
    <property type="project" value="Ensembl"/>
</dbReference>
<dbReference type="GO" id="GO:0045019">
    <property type="term" value="P:negative regulation of nitric oxide biosynthetic process"/>
    <property type="evidence" value="ECO:0007669"/>
    <property type="project" value="Ensembl"/>
</dbReference>
<dbReference type="GO" id="GO:1903377">
    <property type="term" value="P:negative regulation of oxidative stress-induced neuron intrinsic apoptotic signaling pathway"/>
    <property type="evidence" value="ECO:0007669"/>
    <property type="project" value="Ensembl"/>
</dbReference>
<dbReference type="GO" id="GO:0042130">
    <property type="term" value="P:negative regulation of T cell proliferation"/>
    <property type="evidence" value="ECO:0000303"/>
    <property type="project" value="UniProtKB"/>
</dbReference>
<dbReference type="GO" id="GO:0032720">
    <property type="term" value="P:negative regulation of tumor necrosis factor production"/>
    <property type="evidence" value="ECO:0000304"/>
    <property type="project" value="AgBase"/>
</dbReference>
<dbReference type="GO" id="GO:0032689">
    <property type="term" value="P:negative regulation of type II interferon production"/>
    <property type="evidence" value="ECO:0007669"/>
    <property type="project" value="Ensembl"/>
</dbReference>
<dbReference type="GO" id="GO:1904706">
    <property type="term" value="P:negative regulation of vascular associated smooth muscle cell proliferation"/>
    <property type="evidence" value="ECO:0000250"/>
    <property type="project" value="BHF-UCL"/>
</dbReference>
<dbReference type="GO" id="GO:0002904">
    <property type="term" value="P:positive regulation of B cell apoptotic process"/>
    <property type="evidence" value="ECO:0000314"/>
    <property type="project" value="MGI"/>
</dbReference>
<dbReference type="GO" id="GO:0045787">
    <property type="term" value="P:positive regulation of cell cycle"/>
    <property type="evidence" value="ECO:0007669"/>
    <property type="project" value="Ensembl"/>
</dbReference>
<dbReference type="GO" id="GO:0001819">
    <property type="term" value="P:positive regulation of cytokine production"/>
    <property type="evidence" value="ECO:0000314"/>
    <property type="project" value="BHF-UCL"/>
</dbReference>
<dbReference type="GO" id="GO:0051091">
    <property type="term" value="P:positive regulation of DNA-binding transcription factor activity"/>
    <property type="evidence" value="ECO:0000314"/>
    <property type="project" value="BHF-UCL"/>
</dbReference>
<dbReference type="GO" id="GO:0045893">
    <property type="term" value="P:positive regulation of DNA-templated transcription"/>
    <property type="evidence" value="ECO:0000314"/>
    <property type="project" value="UniProtKB"/>
</dbReference>
<dbReference type="GO" id="GO:0001938">
    <property type="term" value="P:positive regulation of endothelial cell proliferation"/>
    <property type="evidence" value="ECO:0007669"/>
    <property type="project" value="Ensembl"/>
</dbReference>
<dbReference type="GO" id="GO:0034116">
    <property type="term" value="P:positive regulation of heterotypic cell-cell adhesion"/>
    <property type="evidence" value="ECO:0000250"/>
    <property type="project" value="BHF-UCL"/>
</dbReference>
<dbReference type="GO" id="GO:0002639">
    <property type="term" value="P:positive regulation of immunoglobulin production"/>
    <property type="evidence" value="ECO:0000316"/>
    <property type="project" value="ARUK-UCL"/>
</dbReference>
<dbReference type="GO" id="GO:0043032">
    <property type="term" value="P:positive regulation of macrophage activation"/>
    <property type="evidence" value="ECO:0007669"/>
    <property type="project" value="Ensembl"/>
</dbReference>
<dbReference type="GO" id="GO:0045348">
    <property type="term" value="P:positive regulation of MHC class II biosynthetic process"/>
    <property type="evidence" value="ECO:0007669"/>
    <property type="project" value="Ensembl"/>
</dbReference>
<dbReference type="GO" id="GO:1902895">
    <property type="term" value="P:positive regulation of miRNA transcription"/>
    <property type="evidence" value="ECO:0000314"/>
    <property type="project" value="ARUK-UCL"/>
</dbReference>
<dbReference type="GO" id="GO:1900100">
    <property type="term" value="P:positive regulation of plasma cell differentiation"/>
    <property type="evidence" value="ECO:0000316"/>
    <property type="project" value="ARUK-UCL"/>
</dbReference>
<dbReference type="GO" id="GO:0046427">
    <property type="term" value="P:positive regulation of receptor signaling pathway via JAK-STAT"/>
    <property type="evidence" value="ECO:0000314"/>
    <property type="project" value="UniProtKB"/>
</dbReference>
<dbReference type="GO" id="GO:1903672">
    <property type="term" value="P:positive regulation of sprouting angiogenesis"/>
    <property type="evidence" value="ECO:0007669"/>
    <property type="project" value="Ensembl"/>
</dbReference>
<dbReference type="GO" id="GO:0045944">
    <property type="term" value="P:positive regulation of transcription by RNA polymerase II"/>
    <property type="evidence" value="ECO:0007669"/>
    <property type="project" value="Ensembl"/>
</dbReference>
<dbReference type="GO" id="GO:1904707">
    <property type="term" value="P:positive regulation of vascular associated smooth muscle cell proliferation"/>
    <property type="evidence" value="ECO:0000250"/>
    <property type="project" value="BHF-UCL"/>
</dbReference>
<dbReference type="GO" id="GO:0010468">
    <property type="term" value="P:regulation of gene expression"/>
    <property type="evidence" value="ECO:0000314"/>
    <property type="project" value="MGI"/>
</dbReference>
<dbReference type="GO" id="GO:0045191">
    <property type="term" value="P:regulation of isotype switching"/>
    <property type="evidence" value="ECO:0000303"/>
    <property type="project" value="UniProtKB"/>
</dbReference>
<dbReference type="GO" id="GO:1903034">
    <property type="term" value="P:regulation of response to wounding"/>
    <property type="evidence" value="ECO:0000250"/>
    <property type="project" value="BHF-UCL"/>
</dbReference>
<dbReference type="GO" id="GO:0050807">
    <property type="term" value="P:regulation of synapse organization"/>
    <property type="evidence" value="ECO:0007669"/>
    <property type="project" value="Ensembl"/>
</dbReference>
<dbReference type="GO" id="GO:0014823">
    <property type="term" value="P:response to activity"/>
    <property type="evidence" value="ECO:0007669"/>
    <property type="project" value="Ensembl"/>
</dbReference>
<dbReference type="GO" id="GO:0034465">
    <property type="term" value="P:response to carbon monoxide"/>
    <property type="evidence" value="ECO:0007669"/>
    <property type="project" value="Ensembl"/>
</dbReference>
<dbReference type="GO" id="GO:0051384">
    <property type="term" value="P:response to glucocorticoid"/>
    <property type="evidence" value="ECO:0000314"/>
    <property type="project" value="BHF-UCL"/>
</dbReference>
<dbReference type="GO" id="GO:0014854">
    <property type="term" value="P:response to inactivity"/>
    <property type="evidence" value="ECO:0007669"/>
    <property type="project" value="Ensembl"/>
</dbReference>
<dbReference type="GO" id="GO:0032868">
    <property type="term" value="P:response to insulin"/>
    <property type="evidence" value="ECO:0007669"/>
    <property type="project" value="Ensembl"/>
</dbReference>
<dbReference type="GO" id="GO:0002237">
    <property type="term" value="P:response to molecule of bacterial origin"/>
    <property type="evidence" value="ECO:0000314"/>
    <property type="project" value="UniProtKB"/>
</dbReference>
<dbReference type="GO" id="GO:0009410">
    <property type="term" value="P:response to xenobiotic stimulus"/>
    <property type="evidence" value="ECO:0007669"/>
    <property type="project" value="Ensembl"/>
</dbReference>
<dbReference type="GO" id="GO:0042092">
    <property type="term" value="P:type 2 immune response"/>
    <property type="evidence" value="ECO:0000304"/>
    <property type="project" value="UniProtKB"/>
</dbReference>
<dbReference type="FunFam" id="1.20.1250.10:FF:000011">
    <property type="entry name" value="Interleukin-10"/>
    <property type="match status" value="1"/>
</dbReference>
<dbReference type="Gene3D" id="1.20.1250.10">
    <property type="match status" value="1"/>
</dbReference>
<dbReference type="InterPro" id="IPR009079">
    <property type="entry name" value="4_helix_cytokine-like_core"/>
</dbReference>
<dbReference type="InterPro" id="IPR000098">
    <property type="entry name" value="IL-10"/>
</dbReference>
<dbReference type="InterPro" id="IPR020443">
    <property type="entry name" value="IL-10/19/20/24/26"/>
</dbReference>
<dbReference type="InterPro" id="IPR020423">
    <property type="entry name" value="IL-10_CS"/>
</dbReference>
<dbReference type="PANTHER" id="PTHR48482:SF5">
    <property type="entry name" value="INTERLEUKIN-10"/>
    <property type="match status" value="1"/>
</dbReference>
<dbReference type="PANTHER" id="PTHR48482">
    <property type="entry name" value="INTERLEUKIN-19-RELATED"/>
    <property type="match status" value="1"/>
</dbReference>
<dbReference type="Pfam" id="PF00726">
    <property type="entry name" value="IL10"/>
    <property type="match status" value="1"/>
</dbReference>
<dbReference type="PRINTS" id="PR01294">
    <property type="entry name" value="INTRLEUKIN10"/>
</dbReference>
<dbReference type="SMART" id="SM00188">
    <property type="entry name" value="IL10"/>
    <property type="match status" value="1"/>
</dbReference>
<dbReference type="SUPFAM" id="SSF47266">
    <property type="entry name" value="4-helical cytokines"/>
    <property type="match status" value="1"/>
</dbReference>
<dbReference type="PROSITE" id="PS00520">
    <property type="entry name" value="INTERLEUKIN_10"/>
    <property type="match status" value="1"/>
</dbReference>
<proteinExistence type="evidence at protein level"/>
<sequence>MHSSALLCCLVLLTGVRASPGQGTQSENSCTHFPGNLPNMLRDLRDAFSRVKTFFQMKDQLDNLLLKESLLEDFKGYLGCQALSEMIQFYLEEVMPQAENQDPDIKAHVNSLGENLKTLRLRLRRCHRFLPCENKSKAVEQVKNAFNKLQEKGIYKAMSEFDIFINYIEAYMTMKIRN</sequence>
<keyword id="KW-0002">3D-structure</keyword>
<keyword id="KW-0202">Cytokine</keyword>
<keyword id="KW-0903">Direct protein sequencing</keyword>
<keyword id="KW-1015">Disulfide bond</keyword>
<keyword id="KW-0325">Glycoprotein</keyword>
<keyword id="KW-1267">Proteomics identification</keyword>
<keyword id="KW-1185">Reference proteome</keyword>
<keyword id="KW-0964">Secreted</keyword>
<keyword id="KW-0732">Signal</keyword>
<name>IL10_HUMAN</name>
<evidence type="ECO:0000250" key="1">
    <source>
        <dbReference type="UniProtKB" id="P18893"/>
    </source>
</evidence>
<evidence type="ECO:0000255" key="2"/>
<evidence type="ECO:0000269" key="3">
    <source>
    </source>
</evidence>
<evidence type="ECO:0000269" key="4">
    <source>
    </source>
</evidence>
<evidence type="ECO:0000269" key="5">
    <source>
    </source>
</evidence>
<evidence type="ECO:0000269" key="6">
    <source>
    </source>
</evidence>
<evidence type="ECO:0000269" key="7">
    <source>
    </source>
</evidence>
<evidence type="ECO:0000269" key="8">
    <source>
    </source>
</evidence>
<evidence type="ECO:0000269" key="9">
    <source>
    </source>
</evidence>
<evidence type="ECO:0000269" key="10">
    <source>
    </source>
</evidence>
<evidence type="ECO:0000269" key="11">
    <source>
    </source>
</evidence>
<evidence type="ECO:0000269" key="12">
    <source>
    </source>
</evidence>
<evidence type="ECO:0000269" key="13">
    <source>
    </source>
</evidence>
<evidence type="ECO:0000269" key="14">
    <source>
    </source>
</evidence>
<evidence type="ECO:0000305" key="15"/>
<evidence type="ECO:0007829" key="16">
    <source>
        <dbReference type="PDB" id="1Y6K"/>
    </source>
</evidence>
<evidence type="ECO:0007829" key="17">
    <source>
        <dbReference type="PDB" id="2H24"/>
    </source>
</evidence>
<evidence type="ECO:0007829" key="18">
    <source>
        <dbReference type="PDB" id="2ILK"/>
    </source>
</evidence>
<protein>
    <recommendedName>
        <fullName>Interleukin-10</fullName>
        <shortName>IL-10</shortName>
    </recommendedName>
    <alternativeName>
        <fullName>Cytokine synthesis inhibitory factor</fullName>
        <shortName>CSIF</shortName>
    </alternativeName>
</protein>
<comment type="function">
    <text evidence="1 4 9 10 11 12 13">Major immune regulatory cytokine that acts on many cells of the immune system where it has profound anti-inflammatory functions, limiting excessive tissue disruption caused by inflammation. Mechanistically, IL10 binds to its heterotetrameric receptor comprising IL10RA and IL10RB leading to JAK1 and STAT2-mediated phosphorylation of STAT3 (PubMed:16982608). In turn, STAT3 translocates to the nucleus where it drives expression of anti-inflammatory mediators (PubMed:18025162). Targets antigen-presenting cells (APCs) such as macrophages and monocytes and inhibits their release of pro-inflammatory cytokines including granulocyte-macrophage colony-stimulating factor /GM-CSF, granulocyte colony-stimulating factor/G-CSF, IL-1 alpha, IL-1 beta, IL-6, IL-8 and TNF-alpha (PubMed:11564774, PubMed:1940799, PubMed:7512027). Also interferes with antigen presentation by reducing the expression of MHC-class II and co-stimulatory molecules, thereby inhibiting their ability to induce T cell activation (PubMed:8144879). In addition, controls the inflammatory response of macrophages by reprogramming essential metabolic pathways including mTOR signaling (By similarity).</text>
</comment>
<comment type="subunit">
    <text evidence="3 8 9">Homodimer (PubMed:11485736, PubMed:15837194). Interacts with IL10RA and IL10RB (PubMed:16982608).</text>
</comment>
<comment type="interaction">
    <interactant intactId="EBI-1031632">
        <id>P22301</id>
    </interactant>
    <interactant intactId="EBI-374781">
        <id>O76003</id>
        <label>GLRX3</label>
    </interactant>
    <organismsDiffer>false</organismsDiffer>
    <experiments>3</experiments>
</comment>
<comment type="interaction">
    <interactant intactId="EBI-1031632">
        <id>P22301</id>
    </interactant>
    <interactant intactId="EBI-1031656">
        <id>Q13651</id>
        <label>IL10RA</label>
    </interactant>
    <organismsDiffer>false</organismsDiffer>
    <experiments>9</experiments>
</comment>
<comment type="interaction">
    <interactant intactId="EBI-1031632">
        <id>P22301</id>
    </interactant>
    <interactant intactId="EBI-11175900">
        <id>Q08334</id>
        <label>IL10RB</label>
    </interactant>
    <organismsDiffer>false</organismsDiffer>
    <experiments>2</experiments>
</comment>
<comment type="interaction">
    <interactant intactId="EBI-1031632">
        <id>P22301</id>
    </interactant>
    <interactant intactId="EBI-11749135">
        <id>Q8IUG1</id>
        <label>KRTAP1-3</label>
    </interactant>
    <organismsDiffer>false</organismsDiffer>
    <experiments>3</experiments>
</comment>
<comment type="interaction">
    <interactant intactId="EBI-1031632">
        <id>P22301</id>
    </interactant>
    <interactant intactId="EBI-10171774">
        <id>P60410</id>
        <label>KRTAP10-8</label>
    </interactant>
    <organismsDiffer>false</organismsDiffer>
    <experiments>3</experiments>
</comment>
<comment type="interaction">
    <interactant intactId="EBI-1031632">
        <id>P22301</id>
    </interactant>
    <interactant intactId="EBI-34579671">
        <id>Q9BYQ7</id>
        <label>KRTAP4-1</label>
    </interactant>
    <organismsDiffer>false</organismsDiffer>
    <experiments>3</experiments>
</comment>
<comment type="interaction">
    <interactant intactId="EBI-1031632">
        <id>P22301</id>
    </interactant>
    <interactant intactId="EBI-22310682">
        <id>P0DPK4</id>
        <label>NOTCH2NLC</label>
    </interactant>
    <organismsDiffer>false</organismsDiffer>
    <experiments>3</experiments>
</comment>
<comment type="interaction">
    <interactant intactId="EBI-1031632">
        <id>P22301</id>
    </interactant>
    <interactant intactId="EBI-765538">
        <id>P25490</id>
        <label>YY1</label>
    </interactant>
    <organismsDiffer>false</organismsDiffer>
    <experiments>3</experiments>
</comment>
<comment type="subcellular location">
    <subcellularLocation>
        <location>Secreted</location>
    </subcellularLocation>
</comment>
<comment type="tissue specificity">
    <text evidence="11 12">Produced by a variety of cell lines, including T-cells, macrophages, mast cells and other cell types.</text>
</comment>
<comment type="polymorphism">
    <text evidence="6">A polymorphism in IL10 promoter region is associated with resistance to graft-versus-host disease (GVHDS) [MIM:614395]. GVHDS is a major complication of allogeneic bone marrow transplantation, in which mature donor T-cells that contaminate the allogeneic bone marrow recognize the tissues of the recipient as foreign, causing a severe inflammatory disease.</text>
</comment>
<comment type="similarity">
    <text evidence="15">Belongs to the IL-10 family.</text>
</comment>
<comment type="online information" name="Wikipedia">
    <link uri="https://en.wikipedia.org/wiki/Interleukin_10"/>
    <text>Interleukin-10 entry</text>
</comment>
<accession>P22301</accession>
<feature type="signal peptide" evidence="7">
    <location>
        <begin position="1"/>
        <end position="18"/>
    </location>
</feature>
<feature type="chain" id="PRO_0000015360" description="Interleukin-10">
    <location>
        <begin position="19"/>
        <end position="178"/>
    </location>
</feature>
<feature type="glycosylation site" description="N-linked (GlcNAc...) asparagine" evidence="2">
    <location>
        <position position="134"/>
    </location>
</feature>
<feature type="disulfide bond" evidence="14">
    <location>
        <begin position="30"/>
        <end position="126"/>
    </location>
</feature>
<feature type="disulfide bond" evidence="14">
    <location>
        <begin position="80"/>
        <end position="132"/>
    </location>
</feature>
<feature type="sequence variant" id="VAR_015883" description="In a family affected by Crohn disease; uncertain significance; decreases secretion thereby reducing the anti-inflammatory effect; dbSNP:rs145922845." evidence="5">
    <original>G</original>
    <variation>R</variation>
    <location>
        <position position="15"/>
    </location>
</feature>
<feature type="mutagenesis site" description="About 80% loss of IL10RA binding." evidence="9">
    <original>R</original>
    <variation>A</variation>
    <location>
        <position position="42"/>
    </location>
</feature>
<feature type="turn" evidence="18">
    <location>
        <begin position="33"/>
        <end position="36"/>
    </location>
</feature>
<feature type="helix" evidence="18">
    <location>
        <begin position="37"/>
        <end position="49"/>
    </location>
</feature>
<feature type="helix" evidence="18">
    <location>
        <begin position="52"/>
        <end position="58"/>
    </location>
</feature>
<feature type="helix" evidence="18">
    <location>
        <begin position="68"/>
        <end position="75"/>
    </location>
</feature>
<feature type="turn" evidence="16">
    <location>
        <begin position="76"/>
        <end position="78"/>
    </location>
</feature>
<feature type="helix" evidence="18">
    <location>
        <begin position="79"/>
        <end position="93"/>
    </location>
</feature>
<feature type="helix" evidence="18">
    <location>
        <begin position="95"/>
        <end position="99"/>
    </location>
</feature>
<feature type="turn" evidence="18">
    <location>
        <begin position="103"/>
        <end position="105"/>
    </location>
</feature>
<feature type="helix" evidence="18">
    <location>
        <begin position="106"/>
        <end position="125"/>
    </location>
</feature>
<feature type="turn" evidence="17">
    <location>
        <begin position="127"/>
        <end position="129"/>
    </location>
</feature>
<feature type="helix" evidence="18">
    <location>
        <begin position="131"/>
        <end position="133"/>
    </location>
</feature>
<feature type="helix" evidence="18">
    <location>
        <begin position="137"/>
        <end position="148"/>
    </location>
</feature>
<feature type="helix" evidence="18">
    <location>
        <begin position="151"/>
        <end position="159"/>
    </location>
</feature>
<feature type="helix" evidence="18">
    <location>
        <begin position="161"/>
        <end position="176"/>
    </location>
</feature>
<gene>
    <name type="primary">IL10</name>
</gene>
<reference key="1">
    <citation type="journal article" date="1991" name="Proc. Natl. Acad. Sci. U.S.A.">
        <title>Isolation and expression of human cytokine synthesis inhibitory factor cDNA clones: homology to Epstein-Barr virus open reading frame BCRFI.</title>
        <authorList>
            <person name="Vieira P."/>
            <person name="de Waal-Malefyt R."/>
            <person name="Dang M.-N."/>
            <person name="Johnson K.E."/>
            <person name="Kastelein R."/>
            <person name="Fiorentino D.F."/>
            <person name="Devries J.E."/>
            <person name="Roncarolo M.-G."/>
            <person name="Mosmann T.R."/>
            <person name="Moore K.W."/>
        </authorList>
    </citation>
    <scope>NUCLEOTIDE SEQUENCE [MRNA]</scope>
    <source>
        <tissue>T-cell</tissue>
    </source>
</reference>
<reference key="2">
    <citation type="submission" date="1994-10" db="EMBL/GenBank/DDBJ databases">
        <title>The structure of the human IL-10 gene.</title>
        <authorList>
            <person name="Sanjanwala B."/>
            <person name="de Waal-Malefyt R."/>
        </authorList>
    </citation>
    <scope>NUCLEOTIDE SEQUENCE [GENOMIC DNA]</scope>
</reference>
<reference key="3">
    <citation type="journal article" date="2001" name="Haerbin Yi Ke Da Xue Xue Bao">
        <title>Cloning, sequencing of human interleukin-10 cDNA and construction of its eukaryotic expression vector.</title>
        <authorList>
            <person name="Dai W.-J."/>
            <person name="Jiang H.-C."/>
            <person name="Pan S.-H."/>
        </authorList>
    </citation>
    <scope>NUCLEOTIDE SEQUENCE [MRNA]</scope>
</reference>
<reference key="4">
    <citation type="submission" date="2001-09" db="EMBL/GenBank/DDBJ databases">
        <authorList>
            <consortium name="SeattleSNPs variation discovery resource"/>
        </authorList>
    </citation>
    <scope>NUCLEOTIDE SEQUENCE [GENOMIC DNA]</scope>
</reference>
<reference key="5">
    <citation type="journal article" date="1997" name="Proc. Natl. Acad. Sci. U.S.A.">
        <title>Identification of functional domains on human interleukin 10.</title>
        <authorList>
            <person name="Gesser B."/>
            <person name="Leffers H."/>
            <person name="Jinquan T."/>
            <person name="Vestergaard C."/>
            <person name="Kirstein N."/>
            <person name="Sindet-Pedersen S."/>
            <person name="Jensen S.L."/>
            <person name="Thestrup-Pedersen K."/>
            <person name="Larsen C.G."/>
        </authorList>
    </citation>
    <scope>PROTEIN SEQUENCE OF 26-34 AND 170-178</scope>
</reference>
<reference key="6">
    <citation type="journal article" date="2004" name="Protein Sci.">
        <title>Signal peptide prediction based on analysis of experimentally verified cleavage sites.</title>
        <authorList>
            <person name="Zhang Z."/>
            <person name="Henzel W.J."/>
        </authorList>
    </citation>
    <scope>PROTEIN SEQUENCE OF 19-33</scope>
</reference>
<reference key="7">
    <citation type="journal article" date="1991" name="J. Exp. Med.">
        <title>Interleukin 10(IL-10) inhibits cytokine synthesis by human monocytes: an autoregulatory role of IL-10 produced by monocytes.</title>
        <authorList>
            <person name="de Waal Malefyt R."/>
            <person name="Abrams J."/>
            <person name="Bennett B."/>
            <person name="Figdor C.G."/>
            <person name="de Vries J.E."/>
        </authorList>
    </citation>
    <scope>FUNCTION</scope>
    <scope>TISSUE SPECIFICITY</scope>
</reference>
<reference key="8">
    <citation type="journal article" date="1993" name="Biochemistry">
        <title>Disulfide bond assignments and secondary structure analysis of human and murine interleukin 10.</title>
        <authorList>
            <person name="Windsor W.T."/>
            <person name="Syto R."/>
            <person name="Tsarbopoulos A."/>
            <person name="Zhang R."/>
            <person name="Durkin J."/>
            <person name="Baldwin S."/>
            <person name="Paliwal S."/>
            <person name="Mui P.W."/>
            <person name="Pramanik B."/>
            <person name="Trotta P.P."/>
        </authorList>
    </citation>
    <scope>DISULFIDE BONDS</scope>
</reference>
<reference key="9">
    <citation type="journal article" date="1994" name="Eur. J. Immunol.">
        <title>Interleukin-10 inhibits B7 and intercellular adhesion molecule-1 expression on human monocytes.</title>
        <authorList>
            <person name="Willems F."/>
            <person name="Marchant A."/>
            <person name="Delville J.P."/>
            <person name="Gerard C."/>
            <person name="Delvaux A."/>
            <person name="Velu T."/>
            <person name="de Boer M."/>
            <person name="Goldman M."/>
        </authorList>
    </citation>
    <scope>FUNCTION</scope>
    <scope>TISSUE SPECIFICITY</scope>
</reference>
<reference key="10">
    <citation type="journal article" date="1994" name="J. Immunol.">
        <title>Antigen presentation in the central nervous system. The inhibitory effect of IL-10 on MHC class II expression and production of cytokines depends on the inducing signals and the type of cell analyzed.</title>
        <authorList>
            <person name="Frei K."/>
            <person name="Lins H."/>
            <person name="Schwerdel C."/>
            <person name="Fontana A."/>
        </authorList>
    </citation>
    <scope>FUNCTION</scope>
</reference>
<reference key="11">
    <citation type="journal article" date="2001" name="J. Immunol.">
        <title>IL-10 inhibits granulocyte-macrophage colony-stimulating factor-dependent human monocyte survival at the early stage of the culture and inhibits the generation of macrophages.</title>
        <authorList>
            <person name="Hashimoto S.I."/>
            <person name="Komuro I."/>
            <person name="Yamada M."/>
            <person name="Akagawa K.S."/>
        </authorList>
    </citation>
    <scope>FUNCTION</scope>
</reference>
<reference key="12">
    <citation type="journal article" date="2003" name="N. Engl. J. Med.">
        <title>Relation of an interleukin-10 promoter polymorphism to graft-versus-host disease and survival after hematopoietic-cell transplantation.</title>
        <authorList>
            <person name="Lin M.T."/>
            <person name="Storer B."/>
            <person name="Martin P.J."/>
            <person name="Tseng L.H."/>
            <person name="Gooley T."/>
            <person name="Chen P.J."/>
            <person name="Hansen J.A."/>
        </authorList>
    </citation>
    <scope>INVOLVEMENT IN RESISTANCE TO GVHDS</scope>
</reference>
<reference key="13">
    <citation type="journal article" date="2006" name="J. Biol. Chem.">
        <title>Conformational changes mediate interleukin-10 receptor 2 (IL-10R2) binding to IL-10 and assembly of the signaling complex.</title>
        <authorList>
            <person name="Yoon S.I."/>
            <person name="Logsdon N.J."/>
            <person name="Sheikh F."/>
            <person name="Donnelly R.P."/>
            <person name="Walter M.R."/>
        </authorList>
    </citation>
    <scope>FUNCTION</scope>
    <scope>MUTAGENESIS OF ARG-42</scope>
    <scope>INTERACTION WITH IL10RA AND IL10RB</scope>
</reference>
<reference key="14">
    <citation type="journal article" date="2007" name="J. Immunol.">
        <title>A transcriptional repressor and corepressor induced by the STAT3-regulated anti-inflammatory signaling pathway.</title>
        <authorList>
            <person name="El Kasmi K.C."/>
            <person name="Smith A.M."/>
            <person name="Williams L."/>
            <person name="Neale G."/>
            <person name="Panopolous A."/>
            <person name="Watowich S.S."/>
            <person name="Hacker H."/>
            <person name="Foxwell B.M."/>
            <person name="Murray P.J."/>
        </authorList>
    </citation>
    <scope>FUNCTION</scope>
</reference>
<reference key="15">
    <citation type="journal article" date="1995" name="Biochemistry">
        <title>Crystal structure of interleukin 10 reveals an interferon gamma-like fold.</title>
        <authorList>
            <person name="Walter M.R."/>
            <person name="Nagabhushan T.L."/>
        </authorList>
    </citation>
    <scope>X-RAY CRYSTALLOGRAPHY (2.0 ANGSTROMS)</scope>
</reference>
<reference key="16">
    <citation type="journal article" date="1995" name="Structure">
        <title>Crystal structure of interleukin-10 reveals the functional dimer with an unexpected topological similarity to interferon gamma.</title>
        <authorList>
            <person name="Zdanov A."/>
            <person name="Schalk-Hihi C."/>
            <person name="Gustchina A."/>
            <person name="Tsang M."/>
            <person name="Wheatherbee J."/>
            <person name="Wlodawer A."/>
        </authorList>
    </citation>
    <scope>X-RAY CRYSTALLOGRAPHY (1.8 ANGSTROMS)</scope>
</reference>
<reference key="17">
    <citation type="journal article" date="1996" name="Protein Sci.">
        <title>Crystal structure of human interleukin-10 at 1.6-A resolution and a model of a complex with its soluble receptor.</title>
        <authorList>
            <person name="Zdanov A."/>
            <person name="Schalk-Hihi C."/>
            <person name="Wlodawer A."/>
        </authorList>
    </citation>
    <scope>X-RAY CRYSTALLOGRAPHY (1.6 ANGSTROMS)</scope>
</reference>
<reference key="18">
    <citation type="journal article" date="2001" name="Immunity">
        <title>Crystal structure of the IL-10/IL-10R1 complex reveals a shared receptor binding site.</title>
        <authorList>
            <person name="Josephson K."/>
            <person name="Logsdon N.J."/>
            <person name="Walter M.R."/>
        </authorList>
    </citation>
    <scope>X-RAY CRYSTALLOGRAPHY (2.9 ANGSTROMS) OF 19-178 IN COMPLEX WITH IL10R1</scope>
</reference>
<reference key="19">
    <citation type="journal article" date="2002" name="Structure">
        <title>Noncompetitive antibody neutralization of IL-10 revealed by protein engineering and x-ray crystallography.</title>
        <authorList>
            <person name="Josephson K."/>
            <person name="Jones B.C."/>
            <person name="Walter L.J."/>
            <person name="DiGiacomo R."/>
            <person name="Indelicato S.R."/>
            <person name="Walter M.R."/>
        </authorList>
    </citation>
    <scope>X-RAY CRYSTALLOGRAPHY (1.91 ANGSTROMS) OF 26-178</scope>
</reference>
<reference key="20">
    <citation type="journal article" date="2005" name="Structure">
        <title>Same structure, different function crystal structure of the Epstein-Barr virus IL-10 bound to the soluble IL-10R1 chain.</title>
        <authorList>
            <person name="Yoon S.I."/>
            <person name="Jones B.C."/>
            <person name="Logsdon N.J."/>
            <person name="Walter M.R."/>
        </authorList>
    </citation>
    <scope>X-RAY CRYSTALLOGRAPHY (2.5 ANGSTROMS) OF 19-178 IN COMPLEX WITH IL10R1</scope>
</reference>
<reference key="21">
    <citation type="journal article" date="2003" name="Scand. J. Gastroenterol.">
        <title>A Gly15Arg mutation in the interleukin-10 gene reduces secretion of interleukin-10 in Crohn disease.</title>
        <authorList>
            <person name="van der Linde K."/>
            <person name="Boor P.P."/>
            <person name="Sandkuijl L.A."/>
            <person name="Meijssen M.A."/>
            <person name="Savelkoul H.F."/>
            <person name="Wilson J.H."/>
            <person name="de Rooij F.W."/>
        </authorList>
    </citation>
    <scope>VARIANT ARG-15</scope>
</reference>